<feature type="chain" id="PRO_0000132773" description="Large ribosomal subunit protein eL18A">
    <location>
        <begin position="1"/>
        <end position="188"/>
    </location>
</feature>
<feature type="region of interest" description="Disordered" evidence="2">
    <location>
        <begin position="153"/>
        <end position="188"/>
    </location>
</feature>
<feature type="compositionally biased region" description="Basic residues" evidence="2">
    <location>
        <begin position="178"/>
        <end position="188"/>
    </location>
</feature>
<comment type="function">
    <text evidence="1">Component of the large ribosomal subunit. The ribosome is a large ribonucleoprotein complex responsible for the synthesis of proteins in the cell.</text>
</comment>
<comment type="subunit">
    <text evidence="1">Component of the large ribosomal subunit.</text>
</comment>
<comment type="subcellular location">
    <subcellularLocation>
        <location evidence="1">Cytoplasm</location>
    </subcellularLocation>
</comment>
<comment type="similarity">
    <text evidence="3">Belongs to the eukaryotic ribosomal protein eL18 family.</text>
</comment>
<name>RL18A_XENLA</name>
<sequence>MGIDIRHNKDRKVRRKEPKSQDIYLRLLVKLYRFLARRTNSSFNRVVLKRLFMSRTNRPPLSMSRLIRKMKLPRRENKTAVVVGCITADVRIHDIPKLTVCALKLTSGARSRILKAGGQIMTFDQLALAAPKGQNTVLLSGPRKAREVYRHFGKAPSTPHSRTKPYVLSKGRKFERARGRRASRGYKN</sequence>
<accession>P09897</accession>
<evidence type="ECO:0000250" key="1">
    <source>
        <dbReference type="UniProtKB" id="Q02543"/>
    </source>
</evidence>
<evidence type="ECO:0000256" key="2">
    <source>
        <dbReference type="SAM" id="MobiDB-lite"/>
    </source>
</evidence>
<evidence type="ECO:0000305" key="3"/>
<gene>
    <name type="primary">rpl18-a</name>
    <name type="synonym">rpl14a</name>
</gene>
<dbReference type="EMBL" id="X06222">
    <property type="protein sequence ID" value="CAA29570.1"/>
    <property type="molecule type" value="mRNA"/>
</dbReference>
<dbReference type="PIR" id="A25766">
    <property type="entry name" value="R5XL8A"/>
</dbReference>
<dbReference type="SMR" id="P09897"/>
<dbReference type="AGR" id="Xenbase:XB-GENE-1006309"/>
<dbReference type="Xenbase" id="XB-GENE-1006309">
    <property type="gene designation" value="rpl18.S"/>
</dbReference>
<dbReference type="Proteomes" id="UP000186698">
    <property type="component" value="Unplaced"/>
</dbReference>
<dbReference type="GO" id="GO:0022625">
    <property type="term" value="C:cytosolic large ribosomal subunit"/>
    <property type="evidence" value="ECO:0000250"/>
    <property type="project" value="UniProtKB"/>
</dbReference>
<dbReference type="GO" id="GO:0003723">
    <property type="term" value="F:RNA binding"/>
    <property type="evidence" value="ECO:0000318"/>
    <property type="project" value="GO_Central"/>
</dbReference>
<dbReference type="GO" id="GO:0003735">
    <property type="term" value="F:structural constituent of ribosome"/>
    <property type="evidence" value="ECO:0000318"/>
    <property type="project" value="GO_Central"/>
</dbReference>
<dbReference type="GO" id="GO:0002181">
    <property type="term" value="P:cytoplasmic translation"/>
    <property type="evidence" value="ECO:0000250"/>
    <property type="project" value="UniProtKB"/>
</dbReference>
<dbReference type="FunFam" id="3.100.10.10:FF:000001">
    <property type="entry name" value="60S ribosomal protein L18"/>
    <property type="match status" value="1"/>
</dbReference>
<dbReference type="Gene3D" id="3.100.10.10">
    <property type="match status" value="1"/>
</dbReference>
<dbReference type="InterPro" id="IPR000039">
    <property type="entry name" value="Ribosomal_eL18"/>
</dbReference>
<dbReference type="InterPro" id="IPR021132">
    <property type="entry name" value="Ribosomal_eL18/eL18-A/B/_CS"/>
</dbReference>
<dbReference type="InterPro" id="IPR021131">
    <property type="entry name" value="Ribosomal_uL15/eL18"/>
</dbReference>
<dbReference type="InterPro" id="IPR036227">
    <property type="entry name" value="Ribosomal_uL15/eL18_sf"/>
</dbReference>
<dbReference type="PANTHER" id="PTHR10934">
    <property type="entry name" value="60S RIBOSOMAL PROTEIN L18"/>
    <property type="match status" value="1"/>
</dbReference>
<dbReference type="PANTHER" id="PTHR10934:SF2">
    <property type="entry name" value="LARGE RIBOSOMAL SUBUNIT PROTEIN EL18"/>
    <property type="match status" value="1"/>
</dbReference>
<dbReference type="Pfam" id="PF17135">
    <property type="entry name" value="Ribosomal_L18"/>
    <property type="match status" value="1"/>
</dbReference>
<dbReference type="SUPFAM" id="SSF52080">
    <property type="entry name" value="Ribosomal proteins L15p and L18e"/>
    <property type="match status" value="1"/>
</dbReference>
<dbReference type="PROSITE" id="PS01106">
    <property type="entry name" value="RIBOSOMAL_L18E"/>
    <property type="match status" value="1"/>
</dbReference>
<proteinExistence type="evidence at transcript level"/>
<organism>
    <name type="scientific">Xenopus laevis</name>
    <name type="common">African clawed frog</name>
    <dbReference type="NCBI Taxonomy" id="8355"/>
    <lineage>
        <taxon>Eukaryota</taxon>
        <taxon>Metazoa</taxon>
        <taxon>Chordata</taxon>
        <taxon>Craniata</taxon>
        <taxon>Vertebrata</taxon>
        <taxon>Euteleostomi</taxon>
        <taxon>Amphibia</taxon>
        <taxon>Batrachia</taxon>
        <taxon>Anura</taxon>
        <taxon>Pipoidea</taxon>
        <taxon>Pipidae</taxon>
        <taxon>Xenopodinae</taxon>
        <taxon>Xenopus</taxon>
        <taxon>Xenopus</taxon>
    </lineage>
</organism>
<protein>
    <recommendedName>
        <fullName evidence="3">Large ribosomal subunit protein eL18A</fullName>
    </recommendedName>
    <alternativeName>
        <fullName>60S ribosomal protein L18-A</fullName>
    </alternativeName>
    <alternativeName>
        <fullName>L14A</fullName>
    </alternativeName>
</protein>
<keyword id="KW-0963">Cytoplasm</keyword>
<keyword id="KW-1185">Reference proteome</keyword>
<keyword id="KW-0687">Ribonucleoprotein</keyword>
<keyword id="KW-0689">Ribosomal protein</keyword>
<reference key="1">
    <citation type="journal article" date="1986" name="Nucleic Acids Res.">
        <title>Sequences coding for the ribosomal protein L14 in Xenopus laevis and Xenopus tropicalis; homologies in the 5' untranslated region are shared with other r-protein mRNAs.</title>
        <authorList>
            <person name="Beccari E."/>
            <person name="Mazzetti P."/>
            <person name="Mileo A.M."/>
            <person name="Bozzoni I."/>
            <person name="Pierandrei-Amaldi P."/>
            <person name="Amaldi F."/>
        </authorList>
    </citation>
    <scope>NUCLEOTIDE SEQUENCE [MRNA]</scope>
    <source>
        <tissue>Oocyte</tissue>
    </source>
</reference>